<evidence type="ECO:0000255" key="1">
    <source>
        <dbReference type="PROSITE-ProRule" id="PRU01008"/>
    </source>
</evidence>
<evidence type="ECO:0000269" key="2">
    <source>
    </source>
</evidence>
<evidence type="ECO:0000269" key="3">
    <source>
    </source>
</evidence>
<evidence type="ECO:0000269" key="4">
    <source>
    </source>
</evidence>
<evidence type="ECO:0000269" key="5">
    <source>
    </source>
</evidence>
<evidence type="ECO:0000305" key="6"/>
<evidence type="ECO:0007829" key="7">
    <source>
        <dbReference type="PDB" id="1TDJ"/>
    </source>
</evidence>
<evidence type="ECO:0007829" key="8">
    <source>
        <dbReference type="PDB" id="8ZKV"/>
    </source>
</evidence>
<feature type="chain" id="PRO_0000185573" description="L-threonine dehydratase biosynthetic IlvA">
    <location>
        <begin position="1"/>
        <end position="514"/>
    </location>
</feature>
<feature type="domain" description="ACT-like 1" evidence="1">
    <location>
        <begin position="339"/>
        <end position="411"/>
    </location>
</feature>
<feature type="domain" description="ACT-like 2" evidence="1">
    <location>
        <begin position="434"/>
        <end position="504"/>
    </location>
</feature>
<feature type="binding site" evidence="5">
    <location>
        <position position="89"/>
    </location>
    <ligand>
        <name>pyridoxal 5'-phosphate</name>
        <dbReference type="ChEBI" id="CHEBI:597326"/>
    </ligand>
</feature>
<feature type="binding site" evidence="5">
    <location>
        <begin position="188"/>
        <end position="192"/>
    </location>
    <ligand>
        <name>pyridoxal 5'-phosphate</name>
        <dbReference type="ChEBI" id="CHEBI:597326"/>
    </ligand>
</feature>
<feature type="binding site" evidence="5">
    <location>
        <position position="315"/>
    </location>
    <ligand>
        <name>pyridoxal 5'-phosphate</name>
        <dbReference type="ChEBI" id="CHEBI:597326"/>
    </ligand>
</feature>
<feature type="modified residue" description="N6-(pyridoxal phosphate)lysine" evidence="5">
    <location>
        <position position="62"/>
    </location>
</feature>
<feature type="sequence conflict" description="In Ref. 2; AAA24014." evidence="6" ref="2">
    <original>A</original>
    <variation>R</variation>
    <location>
        <position position="120"/>
    </location>
</feature>
<feature type="sequence conflict" description="In Ref. 2; AAA24014/AAA67575." evidence="6" ref="2">
    <original>A</original>
    <variation>R</variation>
    <location>
        <position position="140"/>
    </location>
</feature>
<feature type="sequence conflict" description="In Ref. 2; AAA24014." evidence="6" ref="2">
    <original>G</original>
    <variation>C</variation>
    <location>
        <position position="195"/>
    </location>
</feature>
<feature type="sequence conflict" description="In Ref. 3; AAA24024." evidence="6" ref="3">
    <original>A</original>
    <variation>G</variation>
    <location>
        <position position="243"/>
    </location>
</feature>
<feature type="sequence conflict" description="In Ref. 2; AAA24014." evidence="6" ref="2">
    <original>G</original>
    <variation>V</variation>
    <location>
        <position position="334"/>
    </location>
</feature>
<feature type="helix" evidence="8">
    <location>
        <begin position="13"/>
        <end position="22"/>
    </location>
</feature>
<feature type="helix" evidence="8">
    <location>
        <begin position="25"/>
        <end position="27"/>
    </location>
</feature>
<feature type="strand" evidence="8">
    <location>
        <begin position="34"/>
        <end position="36"/>
    </location>
</feature>
<feature type="helix" evidence="8">
    <location>
        <begin position="38"/>
        <end position="44"/>
    </location>
</feature>
<feature type="strand" evidence="8">
    <location>
        <begin position="46"/>
        <end position="52"/>
    </location>
</feature>
<feature type="helix" evidence="8">
    <location>
        <begin position="53"/>
        <end position="55"/>
    </location>
</feature>
<feature type="strand" evidence="7">
    <location>
        <begin position="59"/>
        <end position="61"/>
    </location>
</feature>
<feature type="helix" evidence="8">
    <location>
        <begin position="64"/>
        <end position="71"/>
    </location>
</feature>
<feature type="helix" evidence="8">
    <location>
        <begin position="75"/>
        <end position="80"/>
    </location>
</feature>
<feature type="strand" evidence="8">
    <location>
        <begin position="82"/>
        <end position="85"/>
    </location>
</feature>
<feature type="helix" evidence="8">
    <location>
        <begin position="89"/>
        <end position="101"/>
    </location>
</feature>
<feature type="strand" evidence="8">
    <location>
        <begin position="105"/>
        <end position="109"/>
    </location>
</feature>
<feature type="helix" evidence="8">
    <location>
        <begin position="115"/>
        <end position="124"/>
    </location>
</feature>
<feature type="strand" evidence="8">
    <location>
        <begin position="127"/>
        <end position="130"/>
    </location>
</feature>
<feature type="helix" evidence="8">
    <location>
        <begin position="135"/>
        <end position="149"/>
    </location>
</feature>
<feature type="helix" evidence="8">
    <location>
        <begin position="160"/>
        <end position="176"/>
    </location>
</feature>
<feature type="strand" evidence="8">
    <location>
        <begin position="182"/>
        <end position="186"/>
    </location>
</feature>
<feature type="strand" evidence="8">
    <location>
        <begin position="188"/>
        <end position="190"/>
    </location>
</feature>
<feature type="helix" evidence="8">
    <location>
        <begin position="191"/>
        <end position="203"/>
    </location>
</feature>
<feature type="strand" evidence="8">
    <location>
        <begin position="207"/>
        <end position="214"/>
    </location>
</feature>
<feature type="helix" evidence="8">
    <location>
        <begin position="215"/>
        <end position="217"/>
    </location>
</feature>
<feature type="helix" evidence="8">
    <location>
        <begin position="219"/>
        <end position="226"/>
    </location>
</feature>
<feature type="strand" evidence="8">
    <location>
        <begin position="237"/>
        <end position="239"/>
    </location>
</feature>
<feature type="helix" evidence="8">
    <location>
        <begin position="240"/>
        <end position="242"/>
    </location>
</feature>
<feature type="helix" evidence="8">
    <location>
        <begin position="249"/>
        <end position="258"/>
    </location>
</feature>
<feature type="strand" evidence="8">
    <location>
        <begin position="261"/>
        <end position="265"/>
    </location>
</feature>
<feature type="helix" evidence="8">
    <location>
        <begin position="267"/>
        <end position="281"/>
    </location>
</feature>
<feature type="helix" evidence="8">
    <location>
        <begin position="287"/>
        <end position="303"/>
    </location>
</feature>
<feature type="strand" evidence="8">
    <location>
        <begin position="309"/>
        <end position="314"/>
    </location>
</feature>
<feature type="turn" evidence="8">
    <location>
        <begin position="321"/>
        <end position="323"/>
    </location>
</feature>
<feature type="helix" evidence="8">
    <location>
        <begin position="324"/>
        <end position="333"/>
    </location>
</feature>
<feature type="strand" evidence="7">
    <location>
        <begin position="338"/>
        <end position="344"/>
    </location>
</feature>
<feature type="strand" evidence="7">
    <location>
        <begin position="347"/>
        <end position="350"/>
    </location>
</feature>
<feature type="helix" evidence="7">
    <location>
        <begin position="353"/>
        <end position="357"/>
    </location>
</feature>
<feature type="strand" evidence="7">
    <location>
        <begin position="360"/>
        <end position="370"/>
    </location>
</feature>
<feature type="strand" evidence="7">
    <location>
        <begin position="374"/>
        <end position="376"/>
    </location>
</feature>
<feature type="strand" evidence="7">
    <location>
        <begin position="378"/>
        <end position="384"/>
    </location>
</feature>
<feature type="helix" evidence="7">
    <location>
        <begin position="389"/>
        <end position="399"/>
    </location>
</feature>
<feature type="strand" evidence="7">
    <location>
        <begin position="401"/>
        <end position="403"/>
    </location>
</feature>
<feature type="strand" evidence="7">
    <location>
        <begin position="405"/>
        <end position="407"/>
    </location>
</feature>
<feature type="helix" evidence="7">
    <location>
        <begin position="413"/>
        <end position="417"/>
    </location>
</feature>
<feature type="helix" evidence="7">
    <location>
        <begin position="419"/>
        <end position="421"/>
    </location>
</feature>
<feature type="strand" evidence="7">
    <location>
        <begin position="434"/>
        <end position="439"/>
    </location>
</feature>
<feature type="helix" evidence="7">
    <location>
        <begin position="446"/>
        <end position="454"/>
    </location>
</feature>
<feature type="strand" evidence="7">
    <location>
        <begin position="462"/>
        <end position="464"/>
    </location>
</feature>
<feature type="turn" evidence="7">
    <location>
        <begin position="468"/>
        <end position="470"/>
    </location>
</feature>
<feature type="strand" evidence="7">
    <location>
        <begin position="475"/>
        <end position="479"/>
    </location>
</feature>
<feature type="strand" evidence="7">
    <location>
        <begin position="498"/>
        <end position="501"/>
    </location>
</feature>
<feature type="helix" evidence="7">
    <location>
        <begin position="506"/>
        <end position="511"/>
    </location>
</feature>
<dbReference type="EC" id="4.3.1.19"/>
<dbReference type="EMBL" id="X04890">
    <property type="protein sequence ID" value="CAA28577.1"/>
    <property type="molecule type" value="Genomic_DNA"/>
</dbReference>
<dbReference type="EMBL" id="K03503">
    <property type="protein sequence ID" value="AAA24014.1"/>
    <property type="molecule type" value="Genomic_DNA"/>
</dbReference>
<dbReference type="EMBL" id="M10313">
    <property type="protein sequence ID" value="AAB59054.1"/>
    <property type="molecule type" value="Genomic_DNA"/>
</dbReference>
<dbReference type="EMBL" id="M11689">
    <property type="protein sequence ID" value="AAA24027.1"/>
    <property type="molecule type" value="Genomic_DNA"/>
</dbReference>
<dbReference type="EMBL" id="M32253">
    <property type="protein sequence ID" value="AAA24024.1"/>
    <property type="molecule type" value="Genomic_DNA"/>
</dbReference>
<dbReference type="EMBL" id="M87049">
    <property type="protein sequence ID" value="AAA67575.1"/>
    <property type="molecule type" value="Genomic_DNA"/>
</dbReference>
<dbReference type="EMBL" id="U00096">
    <property type="protein sequence ID" value="AAC77492.1"/>
    <property type="molecule type" value="Genomic_DNA"/>
</dbReference>
<dbReference type="EMBL" id="AP009048">
    <property type="protein sequence ID" value="BAE77525.1"/>
    <property type="molecule type" value="Genomic_DNA"/>
</dbReference>
<dbReference type="EMBL" id="M25497">
    <property type="protein sequence ID" value="AAA24015.1"/>
    <property type="molecule type" value="Genomic_DNA"/>
</dbReference>
<dbReference type="PIR" id="B27310">
    <property type="entry name" value="DWECTS"/>
</dbReference>
<dbReference type="RefSeq" id="NP_418220.1">
    <property type="nucleotide sequence ID" value="NC_000913.3"/>
</dbReference>
<dbReference type="RefSeq" id="WP_000785596.1">
    <property type="nucleotide sequence ID" value="NZ_SSZK01000025.1"/>
</dbReference>
<dbReference type="PDB" id="1TDJ">
    <property type="method" value="X-ray"/>
    <property type="resolution" value="2.80 A"/>
    <property type="chains" value="A=1-514"/>
</dbReference>
<dbReference type="PDB" id="8ZKV">
    <property type="method" value="X-ray"/>
    <property type="resolution" value="2.56 A"/>
    <property type="chains" value="A/B/C/D=8-333"/>
</dbReference>
<dbReference type="PDB" id="8ZLV">
    <property type="method" value="X-ray"/>
    <property type="resolution" value="2.90 A"/>
    <property type="chains" value="A/B=10-335"/>
</dbReference>
<dbReference type="PDBsum" id="1TDJ"/>
<dbReference type="PDBsum" id="8ZKV"/>
<dbReference type="PDBsum" id="8ZLV"/>
<dbReference type="SMR" id="P04968"/>
<dbReference type="BioGRID" id="4259586">
    <property type="interactions" value="25"/>
</dbReference>
<dbReference type="DIP" id="DIP-10018N"/>
<dbReference type="FunCoup" id="P04968">
    <property type="interactions" value="608"/>
</dbReference>
<dbReference type="IntAct" id="P04968">
    <property type="interactions" value="10"/>
</dbReference>
<dbReference type="STRING" id="511145.b3772"/>
<dbReference type="jPOST" id="P04968"/>
<dbReference type="PaxDb" id="511145-b3772"/>
<dbReference type="EnsemblBacteria" id="AAC77492">
    <property type="protein sequence ID" value="AAC77492"/>
    <property type="gene ID" value="b3772"/>
</dbReference>
<dbReference type="GeneID" id="948287"/>
<dbReference type="KEGG" id="ecj:JW3745"/>
<dbReference type="KEGG" id="eco:b3772"/>
<dbReference type="KEGG" id="ecoc:C3026_20430"/>
<dbReference type="PATRIC" id="fig|1411691.4.peg.2934"/>
<dbReference type="EchoBASE" id="EB0488"/>
<dbReference type="eggNOG" id="COG1171">
    <property type="taxonomic scope" value="Bacteria"/>
</dbReference>
<dbReference type="HOGENOM" id="CLU_021152_6_0_6"/>
<dbReference type="InParanoid" id="P04968"/>
<dbReference type="OMA" id="TRFEYTK"/>
<dbReference type="OrthoDB" id="9811476at2"/>
<dbReference type="PhylomeDB" id="P04968"/>
<dbReference type="BioCyc" id="EcoCyc:THREDEHYDSYN-MONOMER"/>
<dbReference type="BioCyc" id="MetaCyc:THREDEHYDSYN-MONOMER"/>
<dbReference type="BRENDA" id="4.3.1.19">
    <property type="organism ID" value="2026"/>
</dbReference>
<dbReference type="UniPathway" id="UPA00047">
    <property type="reaction ID" value="UER00054"/>
</dbReference>
<dbReference type="EvolutionaryTrace" id="P04968"/>
<dbReference type="PRO" id="PR:P04968"/>
<dbReference type="Proteomes" id="UP000000625">
    <property type="component" value="Chromosome"/>
</dbReference>
<dbReference type="GO" id="GO:0016597">
    <property type="term" value="F:amino acid binding"/>
    <property type="evidence" value="ECO:0000314"/>
    <property type="project" value="EcoliWiki"/>
</dbReference>
<dbReference type="GO" id="GO:0030170">
    <property type="term" value="F:pyridoxal phosphate binding"/>
    <property type="evidence" value="ECO:0000314"/>
    <property type="project" value="UniProtKB"/>
</dbReference>
<dbReference type="GO" id="GO:0004794">
    <property type="term" value="F:threonine deaminase activity"/>
    <property type="evidence" value="ECO:0000314"/>
    <property type="project" value="EcoliWiki"/>
</dbReference>
<dbReference type="GO" id="GO:0009082">
    <property type="term" value="P:branched-chain amino acid biosynthetic process"/>
    <property type="evidence" value="ECO:0000315"/>
    <property type="project" value="EcoliWiki"/>
</dbReference>
<dbReference type="GO" id="GO:0009097">
    <property type="term" value="P:isoleucine biosynthetic process"/>
    <property type="evidence" value="ECO:0000314"/>
    <property type="project" value="EcoCyc"/>
</dbReference>
<dbReference type="GO" id="GO:0006566">
    <property type="term" value="P:threonine metabolic process"/>
    <property type="evidence" value="ECO:0000314"/>
    <property type="project" value="UniProtKB"/>
</dbReference>
<dbReference type="CDD" id="cd04906">
    <property type="entry name" value="ACT_ThrD-I_1"/>
    <property type="match status" value="1"/>
</dbReference>
<dbReference type="CDD" id="cd04907">
    <property type="entry name" value="ACT_ThrD-I_2"/>
    <property type="match status" value="1"/>
</dbReference>
<dbReference type="CDD" id="cd01562">
    <property type="entry name" value="Thr-dehyd"/>
    <property type="match status" value="1"/>
</dbReference>
<dbReference type="FunFam" id="3.40.1020.10:FF:000001">
    <property type="entry name" value="L-threonine dehydratase"/>
    <property type="match status" value="1"/>
</dbReference>
<dbReference type="FunFam" id="3.40.50.1100:FF:000008">
    <property type="entry name" value="L-threonine dehydratase"/>
    <property type="match status" value="1"/>
</dbReference>
<dbReference type="Gene3D" id="3.40.50.1100">
    <property type="match status" value="2"/>
</dbReference>
<dbReference type="Gene3D" id="3.40.1020.10">
    <property type="entry name" value="Biosynthetic Threonine Deaminase, Domain 3"/>
    <property type="match status" value="1"/>
</dbReference>
<dbReference type="InterPro" id="IPR045865">
    <property type="entry name" value="ACT-like_dom_sf"/>
</dbReference>
<dbReference type="InterPro" id="IPR050147">
    <property type="entry name" value="Ser/Thr_Dehydratase"/>
</dbReference>
<dbReference type="InterPro" id="IPR000634">
    <property type="entry name" value="Ser/Thr_deHydtase_PyrdxlP-BS"/>
</dbReference>
<dbReference type="InterPro" id="IPR001721">
    <property type="entry name" value="TD_ACT-like"/>
</dbReference>
<dbReference type="InterPro" id="IPR038110">
    <property type="entry name" value="TD_ACT-like_sf"/>
</dbReference>
<dbReference type="InterPro" id="IPR005787">
    <property type="entry name" value="Thr_deHydtase_biosynth"/>
</dbReference>
<dbReference type="InterPro" id="IPR001926">
    <property type="entry name" value="TrpB-like_PALP"/>
</dbReference>
<dbReference type="InterPro" id="IPR036052">
    <property type="entry name" value="TrpB-like_PALP_sf"/>
</dbReference>
<dbReference type="NCBIfam" id="TIGR01124">
    <property type="entry name" value="ilvA_2Cterm"/>
    <property type="match status" value="1"/>
</dbReference>
<dbReference type="NCBIfam" id="NF006674">
    <property type="entry name" value="PRK09224.1"/>
    <property type="match status" value="1"/>
</dbReference>
<dbReference type="PANTHER" id="PTHR48078:SF11">
    <property type="entry name" value="THREONINE DEHYDRATASE, MITOCHONDRIAL"/>
    <property type="match status" value="1"/>
</dbReference>
<dbReference type="PANTHER" id="PTHR48078">
    <property type="entry name" value="THREONINE DEHYDRATASE, MITOCHONDRIAL-RELATED"/>
    <property type="match status" value="1"/>
</dbReference>
<dbReference type="Pfam" id="PF00291">
    <property type="entry name" value="PALP"/>
    <property type="match status" value="1"/>
</dbReference>
<dbReference type="Pfam" id="PF00585">
    <property type="entry name" value="Thr_dehydrat_C"/>
    <property type="match status" value="2"/>
</dbReference>
<dbReference type="SUPFAM" id="SSF55021">
    <property type="entry name" value="ACT-like"/>
    <property type="match status" value="2"/>
</dbReference>
<dbReference type="SUPFAM" id="SSF53686">
    <property type="entry name" value="Tryptophan synthase beta subunit-like PLP-dependent enzymes"/>
    <property type="match status" value="1"/>
</dbReference>
<dbReference type="PROSITE" id="PS51672">
    <property type="entry name" value="ACT_LIKE"/>
    <property type="match status" value="2"/>
</dbReference>
<dbReference type="PROSITE" id="PS00165">
    <property type="entry name" value="DEHYDRATASE_SER_THR"/>
    <property type="match status" value="1"/>
</dbReference>
<gene>
    <name type="primary">ilvA</name>
    <name type="ordered locus">b3772</name>
    <name type="ordered locus">JW3745</name>
</gene>
<name>ILVA_ECOLI</name>
<sequence>MADSQPLSGAPEGAEYLRAVLRAPVYEAAQVTPLQKMEKLSSRLDNVILVKREDRQPVHSFKLRGAYAMMAGLTEEQKAHGVITASAGNHAQGVAFSSARLGVKALIVMPTATADIKVDAVRGFGGEVLLHGANFDEAKAKAIELSQQQGFTWVPPFDHPMVIAGQGTLALELLQQDAHLDRVFVPVGGGGLAAGVAVLIKQLMPQIKVIAVEAEDSACLKAALDAGHPVDLPRVGLFAEGVAVKRIGDETFRLCQEYLDDIITVDSDAICAAMKDLFEDVRAVAEPSGALALAGMKKYIALHNIRGERLAHILSGANVNFHGLRYVSERCELGEQREALLAVTIPEEKGSFLKFCQLLGGRSVTEFNYRFADAKNACIFVGVRLSRGLEERKEILQMLNDGGYSVVDLSDDEMAKLHVRYMVGGRPSHPLQERLYSFEFPESPGALLRFLNTLGTYWNISLFHYRSHGTDYGRVLAAFELGDHEPDFETRLNELGYDCHDETNNPAFRFFLAG</sequence>
<reference key="1">
    <citation type="journal article" date="1987" name="Gene">
        <title>The complete nucleotide sequence of the ilvGMEDA cluster of Escherichia coli K-12.</title>
        <authorList>
            <person name="Cox J.L."/>
            <person name="Cox B.J."/>
            <person name="Fidanza V."/>
            <person name="Calhoun D.H."/>
        </authorList>
    </citation>
    <scope>NUCLEOTIDE SEQUENCE [GENOMIC DNA]</scope>
    <source>
        <strain>K12</strain>
    </source>
</reference>
<reference key="2">
    <citation type="submission" date="1986-08" db="EMBL/GenBank/DDBJ databases">
        <authorList>
            <person name="Garrison E."/>
            <person name="Harms E."/>
            <person name="Umbarger H.E."/>
        </authorList>
    </citation>
    <scope>NUCLEOTIDE SEQUENCE [GENOMIC DNA]</scope>
</reference>
<reference key="3">
    <citation type="journal article" date="1987" name="Nucleic Acids Res.">
        <title>The complete nucleotide sequence of the ilvGMEDA operon of Escherichia coli K-12.</title>
        <authorList>
            <person name="Lawther R.P."/>
            <person name="Wek R.C."/>
            <person name="Lopes J.M."/>
            <person name="Pereira R."/>
            <person name="Taillon B.E."/>
            <person name="Hatfield G.W."/>
        </authorList>
    </citation>
    <scope>NUCLEOTIDE SEQUENCE [GENOMIC DNA]</scope>
    <source>
        <strain>K12</strain>
    </source>
</reference>
<reference key="4">
    <citation type="journal article" date="1992" name="Science">
        <title>Analysis of the Escherichia coli genome: DNA sequence of the region from 84.5 to 86.5 minutes.</title>
        <authorList>
            <person name="Daniels D.L."/>
            <person name="Plunkett G. III"/>
            <person name="Burland V.D."/>
            <person name="Blattner F.R."/>
        </authorList>
    </citation>
    <scope>NUCLEOTIDE SEQUENCE [LARGE SCALE GENOMIC DNA]</scope>
    <source>
        <strain>K12 / MG1655 / ATCC 47076</strain>
    </source>
</reference>
<reference key="5">
    <citation type="journal article" date="1997" name="Science">
        <title>The complete genome sequence of Escherichia coli K-12.</title>
        <authorList>
            <person name="Blattner F.R."/>
            <person name="Plunkett G. III"/>
            <person name="Bloch C.A."/>
            <person name="Perna N.T."/>
            <person name="Burland V."/>
            <person name="Riley M."/>
            <person name="Collado-Vides J."/>
            <person name="Glasner J.D."/>
            <person name="Rode C.K."/>
            <person name="Mayhew G.F."/>
            <person name="Gregor J."/>
            <person name="Davis N.W."/>
            <person name="Kirkpatrick H.A."/>
            <person name="Goeden M.A."/>
            <person name="Rose D.J."/>
            <person name="Mau B."/>
            <person name="Shao Y."/>
        </authorList>
    </citation>
    <scope>NUCLEOTIDE SEQUENCE [LARGE SCALE GENOMIC DNA]</scope>
    <source>
        <strain>K12 / MG1655 / ATCC 47076</strain>
    </source>
</reference>
<reference key="6">
    <citation type="journal article" date="2006" name="Mol. Syst. Biol.">
        <title>Highly accurate genome sequences of Escherichia coli K-12 strains MG1655 and W3110.</title>
        <authorList>
            <person name="Hayashi K."/>
            <person name="Morooka N."/>
            <person name="Yamamoto Y."/>
            <person name="Fujita K."/>
            <person name="Isono K."/>
            <person name="Choi S."/>
            <person name="Ohtsubo E."/>
            <person name="Baba T."/>
            <person name="Wanner B.L."/>
            <person name="Mori H."/>
            <person name="Horiuchi T."/>
        </authorList>
    </citation>
    <scope>NUCLEOTIDE SEQUENCE [LARGE SCALE GENOMIC DNA]</scope>
    <source>
        <strain>K12 / W3110 / ATCC 27325 / DSM 5911</strain>
    </source>
</reference>
<reference key="7">
    <citation type="journal article" date="1986" name="J. Biol. Chem.">
        <title>Nucleotide sequence and in vivo expression of the ilvY and ilvC genes in Escherichia coli K12. Transcription from divergent overlapping promoters.</title>
        <authorList>
            <person name="Wek R.C."/>
            <person name="Hatfield G.W."/>
        </authorList>
    </citation>
    <scope>NUCLEOTIDE SEQUENCE [GENOMIC DNA] OF 439-514</scope>
    <source>
        <strain>K12</strain>
    </source>
</reference>
<reference key="8">
    <citation type="journal article" date="1989" name="Gene">
        <title>Physical identification of an internal promoter, ilvAp, in the distal portion of the ilvGMEDA operon.</title>
        <authorList>
            <person name="Lopes J.M."/>
            <person name="Lawther R.P."/>
        </authorList>
    </citation>
    <scope>NUCLEOTIDE SEQUENCE [GENOMIC DNA] OF 1-10</scope>
    <source>
        <strain>K12</strain>
    </source>
</reference>
<reference key="9">
    <citation type="journal article" date="1956" name="Science">
        <title>Evidence for a negative-feedback mechanism in the biosynthesis of isoleucine.</title>
        <authorList>
            <person name="Umbarger H.E."/>
        </authorList>
    </citation>
    <scope>ACTIVITY REGULATION</scope>
</reference>
<reference key="10">
    <citation type="journal article" date="1957" name="J. Bacteriol.">
        <title>Threonine deamination in Escherichia coli. II. Evidence for two L-threonine deaminases.</title>
        <authorList>
            <person name="Umbarger H.E."/>
            <person name="Brown B."/>
        </authorList>
    </citation>
    <scope>FUNCTION AS A THREONINE DEHYDRATASE AND IN THE L-ISOLEUCINE BIOSYNTHESIS</scope>
    <scope>INDUCTION</scope>
</reference>
<reference key="11">
    <citation type="journal article" date="1965" name="J. Biol. Chem.">
        <title>The mechanism of action of 5'-adenylic acid-activated threonine dehydrase.</title>
        <authorList>
            <person name="Phillips A.T."/>
            <person name="Wood W.A."/>
        </authorList>
    </citation>
    <scope>REACTION MECHANISM</scope>
    <scope>COFACTOR</scope>
</reference>
<reference key="12">
    <citation type="journal article" date="1997" name="Electrophoresis">
        <title>Escherichia coli proteome analysis using the gene-protein database.</title>
        <authorList>
            <person name="VanBogelen R.A."/>
            <person name="Abshire K.Z."/>
            <person name="Moldover B."/>
            <person name="Olson E.R."/>
            <person name="Neidhardt F.C."/>
        </authorList>
    </citation>
    <scope>IDENTIFICATION BY 2D-GEL</scope>
</reference>
<reference key="13">
    <citation type="journal article" date="1998" name="Structure">
        <title>Structure and control of pyridoxal phosphate dependent allosteric threonine deaminase.</title>
        <authorList>
            <person name="Gallagher D.T."/>
            <person name="Gilliland G.L."/>
            <person name="Xiao G."/>
            <person name="Zondlo J."/>
            <person name="Fisher K.E."/>
            <person name="Chinchilla D."/>
            <person name="Eisenstein E."/>
        </authorList>
    </citation>
    <scope>X-RAY CRYSTALLOGRAPHY (2.8 ANGSTROMS) IN COMPLEX WITH PYRIDOXAL PHOSPHATE</scope>
    <scope>SUBUNIT</scope>
</reference>
<organism>
    <name type="scientific">Escherichia coli (strain K12)</name>
    <dbReference type="NCBI Taxonomy" id="83333"/>
    <lineage>
        <taxon>Bacteria</taxon>
        <taxon>Pseudomonadati</taxon>
        <taxon>Pseudomonadota</taxon>
        <taxon>Gammaproteobacteria</taxon>
        <taxon>Enterobacterales</taxon>
        <taxon>Enterobacteriaceae</taxon>
        <taxon>Escherichia</taxon>
    </lineage>
</organism>
<comment type="function">
    <text evidence="3">Catalyzes the anaerobic formation of alpha-ketobutyrate and ammonia from threonine in a two-step reaction. The first step involved a dehydration of threonine and a production of enamine intermediates (aminocrotonate), which tautomerizes to its imine form (iminobutyrate). Both intermediates are unstable and short-lived. The second step is the nonenzymatic hydrolysis of the enamine/imine intermediates to form 2-ketobutyrate and free ammonia. In the low water environment of the cell, the second step is accelerated by RidA.</text>
</comment>
<comment type="catalytic activity">
    <reaction>
        <text>L-threonine = 2-oxobutanoate + NH4(+)</text>
        <dbReference type="Rhea" id="RHEA:22108"/>
        <dbReference type="ChEBI" id="CHEBI:16763"/>
        <dbReference type="ChEBI" id="CHEBI:28938"/>
        <dbReference type="ChEBI" id="CHEBI:57926"/>
        <dbReference type="EC" id="4.3.1.19"/>
    </reaction>
</comment>
<comment type="cofactor">
    <cofactor evidence="4">
        <name>pyridoxal 5'-phosphate</name>
        <dbReference type="ChEBI" id="CHEBI:597326"/>
    </cofactor>
</comment>
<comment type="activity regulation">
    <text evidence="2">Isoleucine allosterically inhibits whereas valine allosterically activates this enzyme.</text>
</comment>
<comment type="pathway">
    <text>Amino-acid biosynthesis; L-isoleucine biosynthesis; 2-oxobutanoate from L-threonine: step 1/1.</text>
</comment>
<comment type="subunit">
    <text evidence="5">Homotetramer.</text>
</comment>
<comment type="induction">
    <text evidence="3">Constitutively expressed.</text>
</comment>
<comment type="similarity">
    <text evidence="6">Belongs to the serine/threonine dehydratase family.</text>
</comment>
<keyword id="KW-0002">3D-structure</keyword>
<keyword id="KW-0021">Allosteric enzyme</keyword>
<keyword id="KW-0028">Amino-acid biosynthesis</keyword>
<keyword id="KW-0100">Branched-chain amino acid biosynthesis</keyword>
<keyword id="KW-0412">Isoleucine biosynthesis</keyword>
<keyword id="KW-0456">Lyase</keyword>
<keyword id="KW-0663">Pyridoxal phosphate</keyword>
<keyword id="KW-1185">Reference proteome</keyword>
<keyword id="KW-0677">Repeat</keyword>
<accession>P04968</accession>
<accession>Q2M881</accession>
<protein>
    <recommendedName>
        <fullName>L-threonine dehydratase biosynthetic IlvA</fullName>
        <ecNumber>4.3.1.19</ecNumber>
    </recommendedName>
    <alternativeName>
        <fullName>Threonine deaminase</fullName>
    </alternativeName>
</protein>
<proteinExistence type="evidence at protein level"/>